<gene>
    <name type="primary">gck</name>
    <name type="ordered locus">STK_20370</name>
</gene>
<keyword id="KW-0067">ATP-binding</keyword>
<keyword id="KW-0418">Kinase</keyword>
<keyword id="KW-0547">Nucleotide-binding</keyword>
<keyword id="KW-1185">Reference proteome</keyword>
<keyword id="KW-0808">Transferase</keyword>
<comment type="function">
    <text evidence="2">Catalyzes the ATP-dependent phosphorylation of D-glycerate to 2-phosphoglycerate. It can also utilize GTP, CTP, UTP, ADP, AMP or pyrophosphate as phosphate donor.</text>
</comment>
<comment type="catalytic activity">
    <reaction evidence="2">
        <text>(R)-glycerate + ATP = (2R)-2-phosphoglycerate + ADP + H(+)</text>
        <dbReference type="Rhea" id="RHEA:27377"/>
        <dbReference type="ChEBI" id="CHEBI:15378"/>
        <dbReference type="ChEBI" id="CHEBI:16659"/>
        <dbReference type="ChEBI" id="CHEBI:30616"/>
        <dbReference type="ChEBI" id="CHEBI:58289"/>
        <dbReference type="ChEBI" id="CHEBI:456216"/>
        <dbReference type="EC" id="2.7.1.165"/>
    </reaction>
</comment>
<comment type="cofactor">
    <cofactor evidence="2">
        <name>Mg(2+)</name>
        <dbReference type="ChEBI" id="CHEBI:18420"/>
    </cofactor>
    <cofactor evidence="2">
        <name>Ni(2+)</name>
        <dbReference type="ChEBI" id="CHEBI:49786"/>
    </cofactor>
    <cofactor evidence="2">
        <name>Mn(2+)</name>
        <dbReference type="ChEBI" id="CHEBI:29035"/>
    </cofactor>
    <cofactor evidence="2">
        <name>Co(2+)</name>
        <dbReference type="ChEBI" id="CHEBI:48828"/>
    </cofactor>
    <cofactor evidence="2">
        <name>Ca(2+)</name>
        <dbReference type="ChEBI" id="CHEBI:29108"/>
    </cofactor>
    <cofactor evidence="2">
        <name>Zn(2+)</name>
        <dbReference type="ChEBI" id="CHEBI:29105"/>
    </cofactor>
    <cofactor evidence="2">
        <name>Sr(2+)</name>
        <dbReference type="ChEBI" id="CHEBI:35104"/>
    </cofactor>
    <text evidence="2">Magnesium. It could be replaced to some extent by nickel, manganese, cobalt, calcium, zinc or strontium.</text>
</comment>
<comment type="biophysicochemical properties">
    <phDependence>
        <text evidence="2">Optimum pH is 4.5. More than 70% of the optimum activity remains at pH between 3 and 7.</text>
    </phDependence>
    <temperatureDependence>
        <text evidence="2">Optimum temperature is 90 degrees Celsius. It exhibits more than half of the maximum activity at temperatures ranging from 70 to 100 degrees Celsius.</text>
    </temperatureDependence>
</comment>
<comment type="subunit">
    <text evidence="2">Homodimer.</text>
</comment>
<comment type="similarity">
    <text evidence="3">Belongs to the glycerate kinase type-1 family.</text>
</comment>
<proteinExistence type="evidence at protein level"/>
<feature type="chain" id="PRO_0000415148" description="Glycerate 2-kinase">
    <location>
        <begin position="1"/>
        <end position="399"/>
    </location>
</feature>
<feature type="binding site" evidence="1">
    <location>
        <position position="48"/>
    </location>
    <ligand>
        <name>substrate</name>
    </ligand>
</feature>
<evidence type="ECO:0000250" key="1"/>
<evidence type="ECO:0000269" key="2">
    <source>
    </source>
</evidence>
<evidence type="ECO:0000305" key="3"/>
<name>GCK_SULTO</name>
<dbReference type="EC" id="2.7.1.165" evidence="2"/>
<dbReference type="EMBL" id="BA000023">
    <property type="protein sequence ID" value="BAB67133.1"/>
    <property type="molecule type" value="Genomic_DNA"/>
</dbReference>
<dbReference type="RefSeq" id="WP_010980109.1">
    <property type="nucleotide sequence ID" value="NC_003106.2"/>
</dbReference>
<dbReference type="SMR" id="Q96YZ3"/>
<dbReference type="STRING" id="273063.STK_20370"/>
<dbReference type="GeneID" id="1460098"/>
<dbReference type="KEGG" id="sto:STK_20370"/>
<dbReference type="PATRIC" id="fig|273063.9.peg.2323"/>
<dbReference type="eggNOG" id="arCOG04170">
    <property type="taxonomic scope" value="Archaea"/>
</dbReference>
<dbReference type="OrthoDB" id="10741at2157"/>
<dbReference type="BioCyc" id="MetaCyc:MONOMER-15370"/>
<dbReference type="BRENDA" id="2.7.1.165">
    <property type="organism ID" value="15396"/>
</dbReference>
<dbReference type="Proteomes" id="UP000001015">
    <property type="component" value="Chromosome"/>
</dbReference>
<dbReference type="GO" id="GO:0005737">
    <property type="term" value="C:cytoplasm"/>
    <property type="evidence" value="ECO:0007669"/>
    <property type="project" value="TreeGrafter"/>
</dbReference>
<dbReference type="GO" id="GO:0005524">
    <property type="term" value="F:ATP binding"/>
    <property type="evidence" value="ECO:0007669"/>
    <property type="project" value="UniProtKB-KW"/>
</dbReference>
<dbReference type="GO" id="GO:0043798">
    <property type="term" value="F:glycerate 2-kinase activity"/>
    <property type="evidence" value="ECO:0000314"/>
    <property type="project" value="UniProtKB"/>
</dbReference>
<dbReference type="GO" id="GO:0008887">
    <property type="term" value="F:glycerate kinase activity"/>
    <property type="evidence" value="ECO:0007669"/>
    <property type="project" value="InterPro"/>
</dbReference>
<dbReference type="Gene3D" id="3.40.50.10180">
    <property type="entry name" value="Glycerate kinase, MOFRL-like N-terminal domain"/>
    <property type="match status" value="1"/>
</dbReference>
<dbReference type="Gene3D" id="3.40.1480.10">
    <property type="entry name" value="MOFRL domain"/>
    <property type="match status" value="1"/>
</dbReference>
<dbReference type="InterPro" id="IPR037035">
    <property type="entry name" value="GK-like_C_sf"/>
</dbReference>
<dbReference type="InterPro" id="IPR038614">
    <property type="entry name" value="GK_N_sf"/>
</dbReference>
<dbReference type="InterPro" id="IPR053656">
    <property type="entry name" value="Glycerate_kinase-1"/>
</dbReference>
<dbReference type="InterPro" id="IPR007835">
    <property type="entry name" value="MOFRL"/>
</dbReference>
<dbReference type="InterPro" id="IPR025286">
    <property type="entry name" value="MOFRL_assoc_dom"/>
</dbReference>
<dbReference type="InterPro" id="IPR039760">
    <property type="entry name" value="MOFRL_protein"/>
</dbReference>
<dbReference type="NCBIfam" id="NF041176">
    <property type="entry name" value="GlyK_Thmprot"/>
    <property type="match status" value="1"/>
</dbReference>
<dbReference type="PANTHER" id="PTHR12227">
    <property type="entry name" value="GLYCERATE KINASE"/>
    <property type="match status" value="1"/>
</dbReference>
<dbReference type="PANTHER" id="PTHR12227:SF0">
    <property type="entry name" value="GLYCERATE KINASE"/>
    <property type="match status" value="1"/>
</dbReference>
<dbReference type="Pfam" id="PF13660">
    <property type="entry name" value="DUF4147"/>
    <property type="match status" value="1"/>
</dbReference>
<dbReference type="Pfam" id="PF05161">
    <property type="entry name" value="MOFRL"/>
    <property type="match status" value="1"/>
</dbReference>
<dbReference type="SUPFAM" id="SSF82544">
    <property type="entry name" value="GckA/TtuD-like"/>
    <property type="match status" value="1"/>
</dbReference>
<organism>
    <name type="scientific">Sulfurisphaera tokodaii (strain DSM 16993 / JCM 10545 / NBRC 100140 / 7)</name>
    <name type="common">Sulfolobus tokodaii</name>
    <dbReference type="NCBI Taxonomy" id="273063"/>
    <lineage>
        <taxon>Archaea</taxon>
        <taxon>Thermoproteota</taxon>
        <taxon>Thermoprotei</taxon>
        <taxon>Sulfolobales</taxon>
        <taxon>Sulfolobaceae</taxon>
        <taxon>Sulfurisphaera</taxon>
    </lineage>
</organism>
<sequence>MDKIIEKILTFSDPYIALDERVVIKKNEIIVDGNHFPYTKPAIIAVGKASYKMAKFFIDKLKDVKGLVILPKGSYISLPKVEVIESTHPDISELSFKAGTEVIKFLKNEDYDLLIFLLSGGASALMEYSNVPYEILRDINEKLVKSGLSVNEINIVRKHLSLIKGGKLTEFSKAPILTLIVSDVPGGDLSAVGSGPTLPDSSTVDDAKLILNKVGLGEYSKYLIETKKEVHNSFNFLILDINIVLRKLRDIVQNPIILSSEIRGDAYSFGQNLAGIVNTSFSNLGLKPPYTLLAGGEPDVKIEGKAGKGGRNGEVCLGFLKWVKRNSNHRFKLYAIATDGIDGNSEYAGCIVDENTIVDNIEYYIYSHSSYEALEKVGRVIKTGYTFTNVNNVYVLEVT</sequence>
<protein>
    <recommendedName>
        <fullName>Glycerate 2-kinase</fullName>
        <shortName>GCK</shortName>
        <ecNumber evidence="2">2.7.1.165</ecNumber>
    </recommendedName>
    <alternativeName>
        <fullName>2-phosphoglycerate forming glycerate kinase</fullName>
    </alternativeName>
</protein>
<accession>Q96YZ3</accession>
<reference key="1">
    <citation type="journal article" date="2001" name="DNA Res.">
        <title>Complete genome sequence of an aerobic thermoacidophilic Crenarchaeon, Sulfolobus tokodaii strain7.</title>
        <authorList>
            <person name="Kawarabayasi Y."/>
            <person name="Hino Y."/>
            <person name="Horikawa H."/>
            <person name="Jin-no K."/>
            <person name="Takahashi M."/>
            <person name="Sekine M."/>
            <person name="Baba S."/>
            <person name="Ankai A."/>
            <person name="Kosugi H."/>
            <person name="Hosoyama A."/>
            <person name="Fukui S."/>
            <person name="Nagai Y."/>
            <person name="Nishijima K."/>
            <person name="Otsuka R."/>
            <person name="Nakazawa H."/>
            <person name="Takamiya M."/>
            <person name="Kato Y."/>
            <person name="Yoshizawa T."/>
            <person name="Tanaka T."/>
            <person name="Kudoh Y."/>
            <person name="Yamazaki J."/>
            <person name="Kushida N."/>
            <person name="Oguchi A."/>
            <person name="Aoki K."/>
            <person name="Masuda S."/>
            <person name="Yanagii M."/>
            <person name="Nishimura M."/>
            <person name="Yamagishi A."/>
            <person name="Oshima T."/>
            <person name="Kikuchi H."/>
        </authorList>
    </citation>
    <scope>NUCLEOTIDE SEQUENCE [LARGE SCALE GENOMIC DNA]</scope>
    <source>
        <strain>DSM 16993 / JCM 10545 / NBRC 100140 / 7</strain>
    </source>
</reference>
<reference key="2">
    <citation type="journal article" date="2009" name="Biotechnol. Lett.">
        <title>A MOFRL family glycerate kinase from the thermophilic crenarchaeon, Sulfolobus tokodaii, with unique enzymatic properties.</title>
        <authorList>
            <person name="Liu B."/>
            <person name="Wu L."/>
            <person name="Liu T."/>
            <person name="Hong Y."/>
            <person name="Shen Y."/>
            <person name="Ni J."/>
        </authorList>
    </citation>
    <scope>FUNCTION AS A GLYCERATE KINASE</scope>
    <scope>CATALYTIC ACTIVITY</scope>
    <scope>BIOPHYSICOCHEMICAL PROPERTIES</scope>
    <scope>COFACTOR</scope>
    <scope>SUBSTRATE SPECIFICITY</scope>
    <scope>SUBUNIT</scope>
</reference>